<gene>
    <name evidence="1" type="primary">ubiD</name>
    <name type="ordered locus">ECA0205</name>
</gene>
<accession>Q6DAP8</accession>
<comment type="function">
    <text evidence="1">Catalyzes the decarboxylation of 3-octaprenyl-4-hydroxy benzoate to 2-octaprenylphenol, an intermediate step in ubiquinone biosynthesis.</text>
</comment>
<comment type="catalytic activity">
    <reaction evidence="1">
        <text>a 4-hydroxy-3-(all-trans-polyprenyl)benzoate + H(+) = a 2-(all-trans-polyprenyl)phenol + CO2</text>
        <dbReference type="Rhea" id="RHEA:41680"/>
        <dbReference type="Rhea" id="RHEA-COMP:9514"/>
        <dbReference type="Rhea" id="RHEA-COMP:9516"/>
        <dbReference type="ChEBI" id="CHEBI:1269"/>
        <dbReference type="ChEBI" id="CHEBI:15378"/>
        <dbReference type="ChEBI" id="CHEBI:16526"/>
        <dbReference type="ChEBI" id="CHEBI:78396"/>
        <dbReference type="EC" id="4.1.1.98"/>
    </reaction>
</comment>
<comment type="cofactor">
    <cofactor evidence="1">
        <name>prenylated FMN</name>
        <dbReference type="ChEBI" id="CHEBI:87746"/>
    </cofactor>
    <text evidence="1">Binds 1 prenylated FMN per subunit.</text>
</comment>
<comment type="cofactor">
    <cofactor evidence="1">
        <name>Mn(2+)</name>
        <dbReference type="ChEBI" id="CHEBI:29035"/>
    </cofactor>
</comment>
<comment type="pathway">
    <text evidence="1">Cofactor biosynthesis; ubiquinone biosynthesis.</text>
</comment>
<comment type="subunit">
    <text evidence="1">Homohexamer.</text>
</comment>
<comment type="subcellular location">
    <subcellularLocation>
        <location evidence="1">Cell membrane</location>
        <topology evidence="1">Peripheral membrane protein</topology>
    </subcellularLocation>
</comment>
<comment type="similarity">
    <text evidence="1">Belongs to the UbiD family.</text>
</comment>
<reference key="1">
    <citation type="journal article" date="2004" name="Proc. Natl. Acad. Sci. U.S.A.">
        <title>Genome sequence of the enterobacterial phytopathogen Erwinia carotovora subsp. atroseptica and characterization of virulence factors.</title>
        <authorList>
            <person name="Bell K.S."/>
            <person name="Sebaihia M."/>
            <person name="Pritchard L."/>
            <person name="Holden M.T.G."/>
            <person name="Hyman L.J."/>
            <person name="Holeva M.C."/>
            <person name="Thomson N.R."/>
            <person name="Bentley S.D."/>
            <person name="Churcher L.J.C."/>
            <person name="Mungall K."/>
            <person name="Atkin R."/>
            <person name="Bason N."/>
            <person name="Brooks K."/>
            <person name="Chillingworth T."/>
            <person name="Clark K."/>
            <person name="Doggett J."/>
            <person name="Fraser A."/>
            <person name="Hance Z."/>
            <person name="Hauser H."/>
            <person name="Jagels K."/>
            <person name="Moule S."/>
            <person name="Norbertczak H."/>
            <person name="Ormond D."/>
            <person name="Price C."/>
            <person name="Quail M.A."/>
            <person name="Sanders M."/>
            <person name="Walker D."/>
            <person name="Whitehead S."/>
            <person name="Salmond G.P.C."/>
            <person name="Birch P.R.J."/>
            <person name="Parkhill J."/>
            <person name="Toth I.K."/>
        </authorList>
    </citation>
    <scope>NUCLEOTIDE SEQUENCE [LARGE SCALE GENOMIC DNA]</scope>
    <source>
        <strain>SCRI 1043 / ATCC BAA-672</strain>
    </source>
</reference>
<keyword id="KW-1003">Cell membrane</keyword>
<keyword id="KW-0210">Decarboxylase</keyword>
<keyword id="KW-0285">Flavoprotein</keyword>
<keyword id="KW-0288">FMN</keyword>
<keyword id="KW-0456">Lyase</keyword>
<keyword id="KW-0464">Manganese</keyword>
<keyword id="KW-0472">Membrane</keyword>
<keyword id="KW-0479">Metal-binding</keyword>
<keyword id="KW-1185">Reference proteome</keyword>
<keyword id="KW-0831">Ubiquinone biosynthesis</keyword>
<sequence length="498" mass="56570">MNSMKYRDLREFLSLLEERGELKRITQPIDPYLEMTEIADRTLRAEGPALLFENPKGYDMPVLCNLFGTPKRVALGMGQEEVSALRDVGKLLAFLKEPEPPKGFRDLVDKMPKFRQVLNMPTKRLFSAPCQEQIWQGDDVDLRRIPVMQCWPEDAAPLITWGLTVTRGPHKERQNLGIYRQQVLGKNKLIMRWLSHRGGALDFQEWCQENPGQRFPVAVALGADPATILGAVTPVPDTLSEYAFAGLLRGHKTEVVKCLSSDLEVPASAEIVLEGYIEPGEMAAEGPYGDHTGYYNEVDHFPVFTVTHITQRQNAIYHSTYTGRPPDEPAVLGVALNEVFVPILQKQFPEIVDFYLPPEGCSYRLAVVTMKKQYAGHAKRVMMGVWSFLRQFMYTKFVIVCDDDINARDWKDVIWAITTRMDPARDTVLVENTPIDYLDFASPVSGLGSKMGLDATNKWPGETQREWGHPIKKDPQVCARIDEIWDELAIFSDREPRR</sequence>
<name>UBID_PECAS</name>
<protein>
    <recommendedName>
        <fullName evidence="1">3-octaprenyl-4-hydroxybenzoate carboxy-lyase</fullName>
        <ecNumber evidence="1">4.1.1.98</ecNumber>
    </recommendedName>
    <alternativeName>
        <fullName evidence="1">Polyprenyl p-hydroxybenzoate decarboxylase</fullName>
    </alternativeName>
</protein>
<feature type="chain" id="PRO_0000267663" description="3-octaprenyl-4-hydroxybenzoate carboxy-lyase">
    <location>
        <begin position="1"/>
        <end position="498"/>
    </location>
</feature>
<feature type="active site" description="Proton donor" evidence="1">
    <location>
        <position position="290"/>
    </location>
</feature>
<feature type="binding site" evidence="1">
    <location>
        <position position="175"/>
    </location>
    <ligand>
        <name>Mn(2+)</name>
        <dbReference type="ChEBI" id="CHEBI:29035"/>
    </ligand>
</feature>
<feature type="binding site" evidence="1">
    <location>
        <begin position="178"/>
        <end position="180"/>
    </location>
    <ligand>
        <name>prenylated FMN</name>
        <dbReference type="ChEBI" id="CHEBI:87746"/>
    </ligand>
</feature>
<feature type="binding site" evidence="1">
    <location>
        <begin position="192"/>
        <end position="194"/>
    </location>
    <ligand>
        <name>prenylated FMN</name>
        <dbReference type="ChEBI" id="CHEBI:87746"/>
    </ligand>
</feature>
<feature type="binding site" evidence="1">
    <location>
        <begin position="197"/>
        <end position="198"/>
    </location>
    <ligand>
        <name>prenylated FMN</name>
        <dbReference type="ChEBI" id="CHEBI:87746"/>
    </ligand>
</feature>
<feature type="binding site" evidence="1">
    <location>
        <position position="241"/>
    </location>
    <ligand>
        <name>Mn(2+)</name>
        <dbReference type="ChEBI" id="CHEBI:29035"/>
    </ligand>
</feature>
<proteinExistence type="inferred from homology"/>
<organism>
    <name type="scientific">Pectobacterium atrosepticum (strain SCRI 1043 / ATCC BAA-672)</name>
    <name type="common">Erwinia carotovora subsp. atroseptica</name>
    <dbReference type="NCBI Taxonomy" id="218491"/>
    <lineage>
        <taxon>Bacteria</taxon>
        <taxon>Pseudomonadati</taxon>
        <taxon>Pseudomonadota</taxon>
        <taxon>Gammaproteobacteria</taxon>
        <taxon>Enterobacterales</taxon>
        <taxon>Pectobacteriaceae</taxon>
        <taxon>Pectobacterium</taxon>
    </lineage>
</organism>
<dbReference type="EC" id="4.1.1.98" evidence="1"/>
<dbReference type="EMBL" id="BX950851">
    <property type="protein sequence ID" value="CAG73124.1"/>
    <property type="molecule type" value="Genomic_DNA"/>
</dbReference>
<dbReference type="RefSeq" id="WP_011091844.1">
    <property type="nucleotide sequence ID" value="NC_004547.2"/>
</dbReference>
<dbReference type="SMR" id="Q6DAP8"/>
<dbReference type="STRING" id="218491.ECA0205"/>
<dbReference type="KEGG" id="eca:ECA0205"/>
<dbReference type="PATRIC" id="fig|218491.5.peg.204"/>
<dbReference type="eggNOG" id="COG0043">
    <property type="taxonomic scope" value="Bacteria"/>
</dbReference>
<dbReference type="HOGENOM" id="CLU_023348_4_1_6"/>
<dbReference type="OrthoDB" id="9809841at2"/>
<dbReference type="UniPathway" id="UPA00232"/>
<dbReference type="Proteomes" id="UP000007966">
    <property type="component" value="Chromosome"/>
</dbReference>
<dbReference type="GO" id="GO:0005829">
    <property type="term" value="C:cytosol"/>
    <property type="evidence" value="ECO:0007669"/>
    <property type="project" value="TreeGrafter"/>
</dbReference>
<dbReference type="GO" id="GO:0005886">
    <property type="term" value="C:plasma membrane"/>
    <property type="evidence" value="ECO:0007669"/>
    <property type="project" value="UniProtKB-SubCell"/>
</dbReference>
<dbReference type="GO" id="GO:0008694">
    <property type="term" value="F:3-octaprenyl-4-hydroxybenzoate carboxy-lyase activity"/>
    <property type="evidence" value="ECO:0007669"/>
    <property type="project" value="UniProtKB-UniRule"/>
</dbReference>
<dbReference type="GO" id="GO:0046872">
    <property type="term" value="F:metal ion binding"/>
    <property type="evidence" value="ECO:0007669"/>
    <property type="project" value="UniProtKB-KW"/>
</dbReference>
<dbReference type="GO" id="GO:0006744">
    <property type="term" value="P:ubiquinone biosynthetic process"/>
    <property type="evidence" value="ECO:0007669"/>
    <property type="project" value="UniProtKB-UniRule"/>
</dbReference>
<dbReference type="FunFam" id="1.20.5.570:FF:000001">
    <property type="entry name" value="3-octaprenyl-4-hydroxybenzoate carboxy-lyase"/>
    <property type="match status" value="1"/>
</dbReference>
<dbReference type="FunFam" id="3.40.1670.10:FF:000001">
    <property type="entry name" value="3-octaprenyl-4-hydroxybenzoate carboxy-lyase"/>
    <property type="match status" value="1"/>
</dbReference>
<dbReference type="Gene3D" id="1.20.5.570">
    <property type="entry name" value="Single helix bin"/>
    <property type="match status" value="1"/>
</dbReference>
<dbReference type="Gene3D" id="3.40.1670.10">
    <property type="entry name" value="UbiD C-terminal domain-like"/>
    <property type="match status" value="1"/>
</dbReference>
<dbReference type="HAMAP" id="MF_01636">
    <property type="entry name" value="UbiD"/>
    <property type="match status" value="1"/>
</dbReference>
<dbReference type="InterPro" id="IPR002830">
    <property type="entry name" value="UbiD"/>
</dbReference>
<dbReference type="InterPro" id="IPR049381">
    <property type="entry name" value="UbiD-like_C"/>
</dbReference>
<dbReference type="InterPro" id="IPR049383">
    <property type="entry name" value="UbiD-like_N"/>
</dbReference>
<dbReference type="InterPro" id="IPR023677">
    <property type="entry name" value="UbiD_bacteria"/>
</dbReference>
<dbReference type="InterPro" id="IPR048304">
    <property type="entry name" value="UbiD_Rift_dom"/>
</dbReference>
<dbReference type="NCBIfam" id="NF008175">
    <property type="entry name" value="PRK10922.1"/>
    <property type="match status" value="1"/>
</dbReference>
<dbReference type="NCBIfam" id="TIGR00148">
    <property type="entry name" value="UbiD family decarboxylase"/>
    <property type="match status" value="1"/>
</dbReference>
<dbReference type="PANTHER" id="PTHR30108">
    <property type="entry name" value="3-OCTAPRENYL-4-HYDROXYBENZOATE CARBOXY-LYASE-RELATED"/>
    <property type="match status" value="1"/>
</dbReference>
<dbReference type="PANTHER" id="PTHR30108:SF17">
    <property type="entry name" value="FERULIC ACID DECARBOXYLASE 1"/>
    <property type="match status" value="1"/>
</dbReference>
<dbReference type="Pfam" id="PF01977">
    <property type="entry name" value="UbiD"/>
    <property type="match status" value="1"/>
</dbReference>
<dbReference type="Pfam" id="PF20696">
    <property type="entry name" value="UbiD_C"/>
    <property type="match status" value="1"/>
</dbReference>
<dbReference type="Pfam" id="PF20695">
    <property type="entry name" value="UbiD_N"/>
    <property type="match status" value="1"/>
</dbReference>
<dbReference type="SUPFAM" id="SSF50475">
    <property type="entry name" value="FMN-binding split barrel"/>
    <property type="match status" value="1"/>
</dbReference>
<dbReference type="SUPFAM" id="SSF143968">
    <property type="entry name" value="UbiD C-terminal domain-like"/>
    <property type="match status" value="1"/>
</dbReference>
<evidence type="ECO:0000255" key="1">
    <source>
        <dbReference type="HAMAP-Rule" id="MF_01636"/>
    </source>
</evidence>